<evidence type="ECO:0000255" key="1">
    <source>
        <dbReference type="HAMAP-Rule" id="MF_00537"/>
    </source>
</evidence>
<evidence type="ECO:0000305" key="2"/>
<dbReference type="EMBL" id="AL596170">
    <property type="protein sequence ID" value="CAC97225.1"/>
    <property type="molecule type" value="Genomic_DNA"/>
</dbReference>
<dbReference type="PIR" id="AI1681">
    <property type="entry name" value="AI1681"/>
</dbReference>
<dbReference type="RefSeq" id="WP_003763042.1">
    <property type="nucleotide sequence ID" value="NC_003212.1"/>
</dbReference>
<dbReference type="SMR" id="Q92AC7"/>
<dbReference type="STRING" id="272626.gene:17566353"/>
<dbReference type="GeneID" id="93235333"/>
<dbReference type="KEGG" id="lin:lin1995"/>
<dbReference type="eggNOG" id="COG0199">
    <property type="taxonomic scope" value="Bacteria"/>
</dbReference>
<dbReference type="HOGENOM" id="CLU_139869_0_0_9"/>
<dbReference type="OrthoDB" id="9810484at2"/>
<dbReference type="Proteomes" id="UP000002513">
    <property type="component" value="Chromosome"/>
</dbReference>
<dbReference type="GO" id="GO:0005737">
    <property type="term" value="C:cytoplasm"/>
    <property type="evidence" value="ECO:0007669"/>
    <property type="project" value="UniProtKB-ARBA"/>
</dbReference>
<dbReference type="GO" id="GO:0015935">
    <property type="term" value="C:small ribosomal subunit"/>
    <property type="evidence" value="ECO:0007669"/>
    <property type="project" value="TreeGrafter"/>
</dbReference>
<dbReference type="GO" id="GO:0019843">
    <property type="term" value="F:rRNA binding"/>
    <property type="evidence" value="ECO:0007669"/>
    <property type="project" value="UniProtKB-UniRule"/>
</dbReference>
<dbReference type="GO" id="GO:0003735">
    <property type="term" value="F:structural constituent of ribosome"/>
    <property type="evidence" value="ECO:0007669"/>
    <property type="project" value="InterPro"/>
</dbReference>
<dbReference type="GO" id="GO:0006412">
    <property type="term" value="P:translation"/>
    <property type="evidence" value="ECO:0007669"/>
    <property type="project" value="UniProtKB-UniRule"/>
</dbReference>
<dbReference type="FunFam" id="4.10.830.10:FF:000003">
    <property type="entry name" value="30S ribosomal protein S14"/>
    <property type="match status" value="1"/>
</dbReference>
<dbReference type="Gene3D" id="4.10.830.10">
    <property type="entry name" value="30s Ribosomal Protein S14, Chain N"/>
    <property type="match status" value="1"/>
</dbReference>
<dbReference type="HAMAP" id="MF_00537">
    <property type="entry name" value="Ribosomal_uS14_1"/>
    <property type="match status" value="1"/>
</dbReference>
<dbReference type="InterPro" id="IPR001209">
    <property type="entry name" value="Ribosomal_uS14"/>
</dbReference>
<dbReference type="InterPro" id="IPR023036">
    <property type="entry name" value="Ribosomal_uS14_bac/plastid"/>
</dbReference>
<dbReference type="InterPro" id="IPR018271">
    <property type="entry name" value="Ribosomal_uS14_CS"/>
</dbReference>
<dbReference type="InterPro" id="IPR043140">
    <property type="entry name" value="Ribosomal_uS14_sf"/>
</dbReference>
<dbReference type="NCBIfam" id="NF006477">
    <property type="entry name" value="PRK08881.1"/>
    <property type="match status" value="1"/>
</dbReference>
<dbReference type="PANTHER" id="PTHR19836">
    <property type="entry name" value="30S RIBOSOMAL PROTEIN S14"/>
    <property type="match status" value="1"/>
</dbReference>
<dbReference type="PANTHER" id="PTHR19836:SF19">
    <property type="entry name" value="SMALL RIBOSOMAL SUBUNIT PROTEIN US14M"/>
    <property type="match status" value="1"/>
</dbReference>
<dbReference type="Pfam" id="PF00253">
    <property type="entry name" value="Ribosomal_S14"/>
    <property type="match status" value="1"/>
</dbReference>
<dbReference type="SUPFAM" id="SSF57716">
    <property type="entry name" value="Glucocorticoid receptor-like (DNA-binding domain)"/>
    <property type="match status" value="1"/>
</dbReference>
<dbReference type="PROSITE" id="PS00527">
    <property type="entry name" value="RIBOSOMAL_S14"/>
    <property type="match status" value="1"/>
</dbReference>
<gene>
    <name evidence="1" type="primary">rpsN</name>
    <name type="synonym">rpsN2</name>
    <name type="ordered locus">lin1995</name>
</gene>
<organism>
    <name type="scientific">Listeria innocua serovar 6a (strain ATCC BAA-680 / CLIP 11262)</name>
    <dbReference type="NCBI Taxonomy" id="272626"/>
    <lineage>
        <taxon>Bacteria</taxon>
        <taxon>Bacillati</taxon>
        <taxon>Bacillota</taxon>
        <taxon>Bacilli</taxon>
        <taxon>Bacillales</taxon>
        <taxon>Listeriaceae</taxon>
        <taxon>Listeria</taxon>
    </lineage>
</organism>
<keyword id="KW-0687">Ribonucleoprotein</keyword>
<keyword id="KW-0689">Ribosomal protein</keyword>
<keyword id="KW-0694">RNA-binding</keyword>
<keyword id="KW-0699">rRNA-binding</keyword>
<proteinExistence type="inferred from homology"/>
<comment type="function">
    <text evidence="1">Binds 16S rRNA, required for the assembly of 30S particles and may also be responsible for determining the conformation of the 16S rRNA at the A site.</text>
</comment>
<comment type="subunit">
    <text evidence="1">Part of the 30S ribosomal subunit. Contacts proteins S3 and S10.</text>
</comment>
<comment type="similarity">
    <text evidence="1">Belongs to the universal ribosomal protein uS14 family.</text>
</comment>
<sequence length="89" mass="10467">MAKKSKVAKHEHQQALVEQYAELRRTLKAEGRFDELRKLPRDSSPTRLHNRCELTGRPHGYMRKFGMSRIRFRELAHQGQLPGVKKASW</sequence>
<name>RS14_LISIN</name>
<feature type="chain" id="PRO_0000130902" description="Small ribosomal subunit protein uS14A">
    <location>
        <begin position="1"/>
        <end position="89"/>
    </location>
</feature>
<protein>
    <recommendedName>
        <fullName evidence="1">Small ribosomal subunit protein uS14A</fullName>
    </recommendedName>
    <alternativeName>
        <fullName evidence="2">30S ribosomal protein S14</fullName>
    </alternativeName>
</protein>
<accession>Q92AC7</accession>
<reference key="1">
    <citation type="journal article" date="2001" name="Science">
        <title>Comparative genomics of Listeria species.</title>
        <authorList>
            <person name="Glaser P."/>
            <person name="Frangeul L."/>
            <person name="Buchrieser C."/>
            <person name="Rusniok C."/>
            <person name="Amend A."/>
            <person name="Baquero F."/>
            <person name="Berche P."/>
            <person name="Bloecker H."/>
            <person name="Brandt P."/>
            <person name="Chakraborty T."/>
            <person name="Charbit A."/>
            <person name="Chetouani F."/>
            <person name="Couve E."/>
            <person name="de Daruvar A."/>
            <person name="Dehoux P."/>
            <person name="Domann E."/>
            <person name="Dominguez-Bernal G."/>
            <person name="Duchaud E."/>
            <person name="Durant L."/>
            <person name="Dussurget O."/>
            <person name="Entian K.-D."/>
            <person name="Fsihi H."/>
            <person name="Garcia-del Portillo F."/>
            <person name="Garrido P."/>
            <person name="Gautier L."/>
            <person name="Goebel W."/>
            <person name="Gomez-Lopez N."/>
            <person name="Hain T."/>
            <person name="Hauf J."/>
            <person name="Jackson D."/>
            <person name="Jones L.-M."/>
            <person name="Kaerst U."/>
            <person name="Kreft J."/>
            <person name="Kuhn M."/>
            <person name="Kunst F."/>
            <person name="Kurapkat G."/>
            <person name="Madueno E."/>
            <person name="Maitournam A."/>
            <person name="Mata Vicente J."/>
            <person name="Ng E."/>
            <person name="Nedjari H."/>
            <person name="Nordsiek G."/>
            <person name="Novella S."/>
            <person name="de Pablos B."/>
            <person name="Perez-Diaz J.-C."/>
            <person name="Purcell R."/>
            <person name="Remmel B."/>
            <person name="Rose M."/>
            <person name="Schlueter T."/>
            <person name="Simoes N."/>
            <person name="Tierrez A."/>
            <person name="Vazquez-Boland J.-A."/>
            <person name="Voss H."/>
            <person name="Wehland J."/>
            <person name="Cossart P."/>
        </authorList>
    </citation>
    <scope>NUCLEOTIDE SEQUENCE [LARGE SCALE GENOMIC DNA]</scope>
    <source>
        <strain>ATCC BAA-680 / CLIP 11262</strain>
    </source>
</reference>